<reference key="1">
    <citation type="journal article" date="1999" name="Gene">
        <title>Characterization of the mouse Kid1 gene and identification of a highly related gene, Kid2.</title>
        <authorList>
            <person name="Tekki-Kessaris N."/>
            <person name="Bonventre J.V."/>
            <person name="Boulter C.A."/>
        </authorList>
    </citation>
    <scope>NUCLEOTIDE SEQUENCE [MRNA]</scope>
    <scope>TISSUE SPECIFICITY</scope>
    <scope>DEVELOPMENTAL STAGE</scope>
    <source>
        <strain>129/Sv</strain>
    </source>
</reference>
<reference key="2">
    <citation type="journal article" date="2009" name="PLoS Biol.">
        <title>Lineage-specific biology revealed by a finished genome assembly of the mouse.</title>
        <authorList>
            <person name="Church D.M."/>
            <person name="Goodstadt L."/>
            <person name="Hillier L.W."/>
            <person name="Zody M.C."/>
            <person name="Goldstein S."/>
            <person name="She X."/>
            <person name="Bult C.J."/>
            <person name="Agarwala R."/>
            <person name="Cherry J.L."/>
            <person name="DiCuccio M."/>
            <person name="Hlavina W."/>
            <person name="Kapustin Y."/>
            <person name="Meric P."/>
            <person name="Maglott D."/>
            <person name="Birtle Z."/>
            <person name="Marques A.C."/>
            <person name="Graves T."/>
            <person name="Zhou S."/>
            <person name="Teague B."/>
            <person name="Potamousis K."/>
            <person name="Churas C."/>
            <person name="Place M."/>
            <person name="Herschleb J."/>
            <person name="Runnheim R."/>
            <person name="Forrest D."/>
            <person name="Amos-Landgraf J."/>
            <person name="Schwartz D.C."/>
            <person name="Cheng Z."/>
            <person name="Lindblad-Toh K."/>
            <person name="Eichler E.E."/>
            <person name="Ponting C.P."/>
        </authorList>
    </citation>
    <scope>NUCLEOTIDE SEQUENCE [LARGE SCALE GENOMIC DNA]</scope>
    <source>
        <strain>C57BL/6J</strain>
    </source>
</reference>
<reference key="3">
    <citation type="journal article" date="2004" name="Genome Res.">
        <title>The status, quality, and expansion of the NIH full-length cDNA project: the Mammalian Gene Collection (MGC).</title>
        <authorList>
            <consortium name="The MGC Project Team"/>
        </authorList>
    </citation>
    <scope>NUCLEOTIDE SEQUENCE [LARGE SCALE MRNA]</scope>
</reference>
<reference key="4">
    <citation type="journal article" date="2005" name="Science">
        <title>The transcriptional landscape of the mammalian genome.</title>
        <authorList>
            <person name="Carninci P."/>
            <person name="Kasukawa T."/>
            <person name="Katayama S."/>
            <person name="Gough J."/>
            <person name="Frith M.C."/>
            <person name="Maeda N."/>
            <person name="Oyama R."/>
            <person name="Ravasi T."/>
            <person name="Lenhard B."/>
            <person name="Wells C."/>
            <person name="Kodzius R."/>
            <person name="Shimokawa K."/>
            <person name="Bajic V.B."/>
            <person name="Brenner S.E."/>
            <person name="Batalov S."/>
            <person name="Forrest A.R."/>
            <person name="Zavolan M."/>
            <person name="Davis M.J."/>
            <person name="Wilming L.G."/>
            <person name="Aidinis V."/>
            <person name="Allen J.E."/>
            <person name="Ambesi-Impiombato A."/>
            <person name="Apweiler R."/>
            <person name="Aturaliya R.N."/>
            <person name="Bailey T.L."/>
            <person name="Bansal M."/>
            <person name="Baxter L."/>
            <person name="Beisel K.W."/>
            <person name="Bersano T."/>
            <person name="Bono H."/>
            <person name="Chalk A.M."/>
            <person name="Chiu K.P."/>
            <person name="Choudhary V."/>
            <person name="Christoffels A."/>
            <person name="Clutterbuck D.R."/>
            <person name="Crowe M.L."/>
            <person name="Dalla E."/>
            <person name="Dalrymple B.P."/>
            <person name="de Bono B."/>
            <person name="Della Gatta G."/>
            <person name="di Bernardo D."/>
            <person name="Down T."/>
            <person name="Engstrom P."/>
            <person name="Fagiolini M."/>
            <person name="Faulkner G."/>
            <person name="Fletcher C.F."/>
            <person name="Fukushima T."/>
            <person name="Furuno M."/>
            <person name="Futaki S."/>
            <person name="Gariboldi M."/>
            <person name="Georgii-Hemming P."/>
            <person name="Gingeras T.R."/>
            <person name="Gojobori T."/>
            <person name="Green R.E."/>
            <person name="Gustincich S."/>
            <person name="Harbers M."/>
            <person name="Hayashi Y."/>
            <person name="Hensch T.K."/>
            <person name="Hirokawa N."/>
            <person name="Hill D."/>
            <person name="Huminiecki L."/>
            <person name="Iacono M."/>
            <person name="Ikeo K."/>
            <person name="Iwama A."/>
            <person name="Ishikawa T."/>
            <person name="Jakt M."/>
            <person name="Kanapin A."/>
            <person name="Katoh M."/>
            <person name="Kawasawa Y."/>
            <person name="Kelso J."/>
            <person name="Kitamura H."/>
            <person name="Kitano H."/>
            <person name="Kollias G."/>
            <person name="Krishnan S.P."/>
            <person name="Kruger A."/>
            <person name="Kummerfeld S.K."/>
            <person name="Kurochkin I.V."/>
            <person name="Lareau L.F."/>
            <person name="Lazarevic D."/>
            <person name="Lipovich L."/>
            <person name="Liu J."/>
            <person name="Liuni S."/>
            <person name="McWilliam S."/>
            <person name="Madan Babu M."/>
            <person name="Madera M."/>
            <person name="Marchionni L."/>
            <person name="Matsuda H."/>
            <person name="Matsuzawa S."/>
            <person name="Miki H."/>
            <person name="Mignone F."/>
            <person name="Miyake S."/>
            <person name="Morris K."/>
            <person name="Mottagui-Tabar S."/>
            <person name="Mulder N."/>
            <person name="Nakano N."/>
            <person name="Nakauchi H."/>
            <person name="Ng P."/>
            <person name="Nilsson R."/>
            <person name="Nishiguchi S."/>
            <person name="Nishikawa S."/>
            <person name="Nori F."/>
            <person name="Ohara O."/>
            <person name="Okazaki Y."/>
            <person name="Orlando V."/>
            <person name="Pang K.C."/>
            <person name="Pavan W.J."/>
            <person name="Pavesi G."/>
            <person name="Pesole G."/>
            <person name="Petrovsky N."/>
            <person name="Piazza S."/>
            <person name="Reed J."/>
            <person name="Reid J.F."/>
            <person name="Ring B.Z."/>
            <person name="Ringwald M."/>
            <person name="Rost B."/>
            <person name="Ruan Y."/>
            <person name="Salzberg S.L."/>
            <person name="Sandelin A."/>
            <person name="Schneider C."/>
            <person name="Schoenbach C."/>
            <person name="Sekiguchi K."/>
            <person name="Semple C.A."/>
            <person name="Seno S."/>
            <person name="Sessa L."/>
            <person name="Sheng Y."/>
            <person name="Shibata Y."/>
            <person name="Shimada H."/>
            <person name="Shimada K."/>
            <person name="Silva D."/>
            <person name="Sinclair B."/>
            <person name="Sperling S."/>
            <person name="Stupka E."/>
            <person name="Sugiura K."/>
            <person name="Sultana R."/>
            <person name="Takenaka Y."/>
            <person name="Taki K."/>
            <person name="Tammoja K."/>
            <person name="Tan S.L."/>
            <person name="Tang S."/>
            <person name="Taylor M.S."/>
            <person name="Tegner J."/>
            <person name="Teichmann S.A."/>
            <person name="Ueda H.R."/>
            <person name="van Nimwegen E."/>
            <person name="Verardo R."/>
            <person name="Wei C.L."/>
            <person name="Yagi K."/>
            <person name="Yamanishi H."/>
            <person name="Zabarovsky E."/>
            <person name="Zhu S."/>
            <person name="Zimmer A."/>
            <person name="Hide W."/>
            <person name="Bult C."/>
            <person name="Grimmond S.M."/>
            <person name="Teasdale R.D."/>
            <person name="Liu E.T."/>
            <person name="Brusic V."/>
            <person name="Quackenbush J."/>
            <person name="Wahlestedt C."/>
            <person name="Mattick J.S."/>
            <person name="Hume D.A."/>
            <person name="Kai C."/>
            <person name="Sasaki D."/>
            <person name="Tomaru Y."/>
            <person name="Fukuda S."/>
            <person name="Kanamori-Katayama M."/>
            <person name="Suzuki M."/>
            <person name="Aoki J."/>
            <person name="Arakawa T."/>
            <person name="Iida J."/>
            <person name="Imamura K."/>
            <person name="Itoh M."/>
            <person name="Kato T."/>
            <person name="Kawaji H."/>
            <person name="Kawagashira N."/>
            <person name="Kawashima T."/>
            <person name="Kojima M."/>
            <person name="Kondo S."/>
            <person name="Konno H."/>
            <person name="Nakano K."/>
            <person name="Ninomiya N."/>
            <person name="Nishio T."/>
            <person name="Okada M."/>
            <person name="Plessy C."/>
            <person name="Shibata K."/>
            <person name="Shiraki T."/>
            <person name="Suzuki S."/>
            <person name="Tagami M."/>
            <person name="Waki K."/>
            <person name="Watahiki A."/>
            <person name="Okamura-Oho Y."/>
            <person name="Suzuki H."/>
            <person name="Kawai J."/>
            <person name="Hayashizaki Y."/>
        </authorList>
    </citation>
    <scope>NUCLEOTIDE SEQUENCE [LARGE SCALE MRNA] OF 245-590</scope>
    <source>
        <strain>C57BL/6J</strain>
        <tissue>Tongue</tissue>
    </source>
</reference>
<reference key="5">
    <citation type="journal article" date="2013" name="Genes Dev.">
        <title>Oncogenic RAS directs silencing of tumor suppressor genes through ordered recruitment of transcriptional repressors.</title>
        <authorList>
            <person name="Wajapeyee N."/>
            <person name="Malonia S.K."/>
            <person name="Palakurthy R.K."/>
            <person name="Green M.R."/>
        </authorList>
    </citation>
    <scope>FUNCTION</scope>
    <scope>SUBCELLULAR LOCATION</scope>
</reference>
<dbReference type="EMBL" id="AF184112">
    <property type="protein sequence ID" value="AAF01034.1"/>
    <property type="molecule type" value="mRNA"/>
</dbReference>
<dbReference type="EMBL" id="AL627215">
    <property type="status" value="NOT_ANNOTATED_CDS"/>
    <property type="molecule type" value="Genomic_DNA"/>
</dbReference>
<dbReference type="EMBL" id="BC107400">
    <property type="protein sequence ID" value="AAI07401.1"/>
    <property type="molecule type" value="mRNA"/>
</dbReference>
<dbReference type="EMBL" id="BC107401">
    <property type="protein sequence ID" value="AAI07402.1"/>
    <property type="molecule type" value="mRNA"/>
</dbReference>
<dbReference type="EMBL" id="AK010007">
    <property type="protein sequence ID" value="BAB26638.1"/>
    <property type="molecule type" value="mRNA"/>
</dbReference>
<dbReference type="CCDS" id="CCDS24641.1"/>
<dbReference type="RefSeq" id="NP_038772.1">
    <property type="nucleotide sequence ID" value="NM_013744.3"/>
</dbReference>
<dbReference type="SMR" id="Q9QXT9"/>
<dbReference type="STRING" id="10090.ENSMUSP00000104752"/>
<dbReference type="iPTMnet" id="Q9QXT9"/>
<dbReference type="PhosphoSitePlus" id="Q9QXT9"/>
<dbReference type="jPOST" id="Q9QXT9"/>
<dbReference type="PaxDb" id="10090-ENSMUSP00000104752"/>
<dbReference type="ProteomicsDB" id="275332"/>
<dbReference type="Antibodypedia" id="29455">
    <property type="antibodies" value="16 antibodies from 9 providers"/>
</dbReference>
<dbReference type="DNASU" id="27274"/>
<dbReference type="Ensembl" id="ENSMUST00000109124.10">
    <property type="protein sequence ID" value="ENSMUSP00000104752.4"/>
    <property type="gene ID" value="ENSMUSG00000020335.14"/>
</dbReference>
<dbReference type="Ensembl" id="ENSMUST00000164280.2">
    <property type="protein sequence ID" value="ENSMUSP00000127671.2"/>
    <property type="gene ID" value="ENSMUSG00000020335.14"/>
</dbReference>
<dbReference type="GeneID" id="27274"/>
<dbReference type="KEGG" id="mmu:27274"/>
<dbReference type="UCSC" id="uc007itd.2">
    <property type="organism name" value="mouse"/>
</dbReference>
<dbReference type="AGR" id="MGI:1351476"/>
<dbReference type="CTD" id="27274"/>
<dbReference type="MGI" id="MGI:1351476">
    <property type="gene designation" value="Zfp354b"/>
</dbReference>
<dbReference type="VEuPathDB" id="HostDB:ENSMUSG00000020335"/>
<dbReference type="eggNOG" id="KOG1721">
    <property type="taxonomic scope" value="Eukaryota"/>
</dbReference>
<dbReference type="GeneTree" id="ENSGT00940000162570"/>
<dbReference type="HOGENOM" id="CLU_002678_44_5_1"/>
<dbReference type="InParanoid" id="Q9QXT9"/>
<dbReference type="OMA" id="FISEKSC"/>
<dbReference type="OrthoDB" id="8117402at2759"/>
<dbReference type="PhylomeDB" id="Q9QXT9"/>
<dbReference type="TreeFam" id="TF341817"/>
<dbReference type="Reactome" id="R-MMU-212436">
    <property type="pathway name" value="Generic Transcription Pathway"/>
</dbReference>
<dbReference type="BioGRID-ORCS" id="27274">
    <property type="hits" value="1 hit in 76 CRISPR screens"/>
</dbReference>
<dbReference type="ChiTaRS" id="Zfp354b">
    <property type="organism name" value="mouse"/>
</dbReference>
<dbReference type="PRO" id="PR:Q9QXT9"/>
<dbReference type="Proteomes" id="UP000000589">
    <property type="component" value="Chromosome 11"/>
</dbReference>
<dbReference type="RNAct" id="Q9QXT9">
    <property type="molecule type" value="protein"/>
</dbReference>
<dbReference type="Bgee" id="ENSMUSG00000020335">
    <property type="expression patterns" value="Expressed in ureteric bud trunk and 181 other cell types or tissues"/>
</dbReference>
<dbReference type="GO" id="GO:0005634">
    <property type="term" value="C:nucleus"/>
    <property type="evidence" value="ECO:0007669"/>
    <property type="project" value="UniProtKB-SubCell"/>
</dbReference>
<dbReference type="GO" id="GO:0003682">
    <property type="term" value="F:chromatin binding"/>
    <property type="evidence" value="ECO:0000314"/>
    <property type="project" value="MGI"/>
</dbReference>
<dbReference type="GO" id="GO:0003677">
    <property type="term" value="F:DNA binding"/>
    <property type="evidence" value="ECO:0007669"/>
    <property type="project" value="UniProtKB-KW"/>
</dbReference>
<dbReference type="GO" id="GO:0003714">
    <property type="term" value="F:transcription corepressor activity"/>
    <property type="evidence" value="ECO:0000314"/>
    <property type="project" value="UniProtKB"/>
</dbReference>
<dbReference type="GO" id="GO:0008270">
    <property type="term" value="F:zinc ion binding"/>
    <property type="evidence" value="ECO:0007669"/>
    <property type="project" value="UniProtKB-KW"/>
</dbReference>
<dbReference type="GO" id="GO:0000122">
    <property type="term" value="P:negative regulation of transcription by RNA polymerase II"/>
    <property type="evidence" value="ECO:0000314"/>
    <property type="project" value="MGI"/>
</dbReference>
<dbReference type="CDD" id="cd07765">
    <property type="entry name" value="KRAB_A-box"/>
    <property type="match status" value="1"/>
</dbReference>
<dbReference type="FunFam" id="3.30.160.60:FF:000005">
    <property type="entry name" value="Zinc finger protein 14 homolog"/>
    <property type="match status" value="1"/>
</dbReference>
<dbReference type="FunFam" id="3.30.160.60:FF:002343">
    <property type="entry name" value="Zinc finger protein 33A"/>
    <property type="match status" value="2"/>
</dbReference>
<dbReference type="FunFam" id="3.30.160.60:FF:000387">
    <property type="entry name" value="Zinc finger protein 354A"/>
    <property type="match status" value="1"/>
</dbReference>
<dbReference type="FunFam" id="3.30.160.60:FF:000579">
    <property type="entry name" value="Zinc finger protein 354B"/>
    <property type="match status" value="1"/>
</dbReference>
<dbReference type="FunFam" id="3.30.160.60:FF:001387">
    <property type="entry name" value="Zinc finger protein 354B"/>
    <property type="match status" value="1"/>
</dbReference>
<dbReference type="FunFam" id="3.30.160.60:FF:001586">
    <property type="entry name" value="Zinc finger protein 354B"/>
    <property type="match status" value="1"/>
</dbReference>
<dbReference type="FunFam" id="3.30.160.60:FF:001465">
    <property type="entry name" value="Zinc finger protein 560"/>
    <property type="match status" value="1"/>
</dbReference>
<dbReference type="FunFam" id="3.30.160.60:FF:000011">
    <property type="entry name" value="zinc finger protein 615 isoform X1"/>
    <property type="match status" value="2"/>
</dbReference>
<dbReference type="FunFam" id="3.30.160.60:FF:000710">
    <property type="entry name" value="Zinc finger protein 768"/>
    <property type="match status" value="1"/>
</dbReference>
<dbReference type="FunFam" id="3.30.160.60:FF:000416">
    <property type="entry name" value="zinc finger protein 879 isoform X1"/>
    <property type="match status" value="1"/>
</dbReference>
<dbReference type="FunFam" id="3.30.160.60:FF:000485">
    <property type="entry name" value="Zinc finger protein 90 homolog"/>
    <property type="match status" value="1"/>
</dbReference>
<dbReference type="Gene3D" id="6.10.140.140">
    <property type="match status" value="1"/>
</dbReference>
<dbReference type="Gene3D" id="3.30.160.60">
    <property type="entry name" value="Classic Zinc Finger"/>
    <property type="match status" value="13"/>
</dbReference>
<dbReference type="InterPro" id="IPR001909">
    <property type="entry name" value="KRAB"/>
</dbReference>
<dbReference type="InterPro" id="IPR036051">
    <property type="entry name" value="KRAB_dom_sf"/>
</dbReference>
<dbReference type="InterPro" id="IPR036236">
    <property type="entry name" value="Znf_C2H2_sf"/>
</dbReference>
<dbReference type="InterPro" id="IPR013087">
    <property type="entry name" value="Znf_C2H2_type"/>
</dbReference>
<dbReference type="PANTHER" id="PTHR24399:SF75">
    <property type="entry name" value="ZFP14 ZINC FINGER PROTEIN-RELATED"/>
    <property type="match status" value="1"/>
</dbReference>
<dbReference type="PANTHER" id="PTHR24399">
    <property type="entry name" value="ZINC FINGER AND BTB DOMAIN-CONTAINING"/>
    <property type="match status" value="1"/>
</dbReference>
<dbReference type="Pfam" id="PF01352">
    <property type="entry name" value="KRAB"/>
    <property type="match status" value="1"/>
</dbReference>
<dbReference type="Pfam" id="PF00096">
    <property type="entry name" value="zf-C2H2"/>
    <property type="match status" value="13"/>
</dbReference>
<dbReference type="SMART" id="SM00349">
    <property type="entry name" value="KRAB"/>
    <property type="match status" value="1"/>
</dbReference>
<dbReference type="SMART" id="SM00355">
    <property type="entry name" value="ZnF_C2H2"/>
    <property type="match status" value="13"/>
</dbReference>
<dbReference type="SUPFAM" id="SSF57667">
    <property type="entry name" value="beta-beta-alpha zinc fingers"/>
    <property type="match status" value="7"/>
</dbReference>
<dbReference type="SUPFAM" id="SSF109640">
    <property type="entry name" value="KRAB domain (Kruppel-associated box)"/>
    <property type="match status" value="1"/>
</dbReference>
<dbReference type="PROSITE" id="PS50805">
    <property type="entry name" value="KRAB"/>
    <property type="match status" value="1"/>
</dbReference>
<dbReference type="PROSITE" id="PS00028">
    <property type="entry name" value="ZINC_FINGER_C2H2_1"/>
    <property type="match status" value="13"/>
</dbReference>
<dbReference type="PROSITE" id="PS50157">
    <property type="entry name" value="ZINC_FINGER_C2H2_2"/>
    <property type="match status" value="13"/>
</dbReference>
<feature type="chain" id="PRO_0000280407" description="Zinc finger protein 354B">
    <location>
        <begin position="1"/>
        <end position="601"/>
    </location>
</feature>
<feature type="domain" description="KRAB" evidence="3">
    <location>
        <begin position="14"/>
        <end position="85"/>
    </location>
</feature>
<feature type="zinc finger region" description="C2H2-type 1" evidence="2">
    <location>
        <begin position="206"/>
        <end position="228"/>
    </location>
</feature>
<feature type="zinc finger region" description="C2H2-type 2" evidence="2">
    <location>
        <begin position="234"/>
        <end position="256"/>
    </location>
</feature>
<feature type="zinc finger region" description="C2H2-type 3" evidence="2">
    <location>
        <begin position="262"/>
        <end position="284"/>
    </location>
</feature>
<feature type="zinc finger region" description="C2H2-type 4" evidence="2">
    <location>
        <begin position="290"/>
        <end position="312"/>
    </location>
</feature>
<feature type="zinc finger region" description="C2H2-type 5" evidence="2">
    <location>
        <begin position="343"/>
        <end position="365"/>
    </location>
</feature>
<feature type="zinc finger region" description="C2H2-type 6" evidence="2">
    <location>
        <begin position="371"/>
        <end position="393"/>
    </location>
</feature>
<feature type="zinc finger region" description="C2H2-type 7" evidence="2">
    <location>
        <begin position="399"/>
        <end position="421"/>
    </location>
</feature>
<feature type="zinc finger region" description="C2H2-type 8" evidence="2">
    <location>
        <begin position="427"/>
        <end position="449"/>
    </location>
</feature>
<feature type="zinc finger region" description="C2H2-type 9" evidence="2">
    <location>
        <begin position="455"/>
        <end position="477"/>
    </location>
</feature>
<feature type="zinc finger region" description="C2H2-type 10" evidence="2">
    <location>
        <begin position="483"/>
        <end position="505"/>
    </location>
</feature>
<feature type="zinc finger region" description="C2H2-type 11" evidence="2">
    <location>
        <begin position="511"/>
        <end position="533"/>
    </location>
</feature>
<feature type="zinc finger region" description="C2H2-type 12" evidence="2">
    <location>
        <begin position="539"/>
        <end position="561"/>
    </location>
</feature>
<feature type="zinc finger region" description="C2H2-type 13" evidence="2">
    <location>
        <begin position="567"/>
        <end position="589"/>
    </location>
</feature>
<feature type="cross-link" description="Glycyl lysine isopeptide (Lys-Gly) (interchain with G-Cter in SUMO2)" evidence="1">
    <location>
        <position position="150"/>
    </location>
</feature>
<gene>
    <name type="primary">Znf354b</name>
    <name evidence="6" type="synonym">Kid2</name>
    <name type="synonym">Zfp354b</name>
</gene>
<protein>
    <recommendedName>
        <fullName evidence="7">Zinc finger protein 354B</fullName>
    </recommendedName>
    <alternativeName>
        <fullName evidence="6">Kidney, ischemia, and developmentally-regulated protein 2</fullName>
    </alternativeName>
</protein>
<comment type="function">
    <text evidence="5">Transcriptional repressor that binds DNA upon activation by RAS proteins signal transduction to initiate transcriptional silencing through the recruitment of additional DNA-binding proteins, multisubunit complexes and chromatin-modifying activities to establish a platform for DNMT1 recruitment.</text>
</comment>
<comment type="subcellular location">
    <subcellularLocation>
        <location evidence="8">Nucleus</location>
    </subcellularLocation>
</comment>
<comment type="tissue specificity">
    <text evidence="4">Expressed in brain and kidney. Lower levels in lung, muscle, heart, testis, tongue and eye.</text>
</comment>
<comment type="developmental stage">
    <text evidence="4">Expressed at 16.5 dpc in brain, heart, lung, kidney and gut.</text>
</comment>
<comment type="similarity">
    <text evidence="7">Belongs to the krueppel C2H2-type zinc-finger protein family.</text>
</comment>
<name>Z354B_MOUSE</name>
<organism>
    <name type="scientific">Mus musculus</name>
    <name type="common">Mouse</name>
    <dbReference type="NCBI Taxonomy" id="10090"/>
    <lineage>
        <taxon>Eukaryota</taxon>
        <taxon>Metazoa</taxon>
        <taxon>Chordata</taxon>
        <taxon>Craniata</taxon>
        <taxon>Vertebrata</taxon>
        <taxon>Euteleostomi</taxon>
        <taxon>Mammalia</taxon>
        <taxon>Eutheria</taxon>
        <taxon>Euarchontoglires</taxon>
        <taxon>Glires</taxon>
        <taxon>Rodentia</taxon>
        <taxon>Myomorpha</taxon>
        <taxon>Muroidea</taxon>
        <taxon>Muridae</taxon>
        <taxon>Murinae</taxon>
        <taxon>Mus</taxon>
        <taxon>Mus</taxon>
    </lineage>
</organism>
<accession>Q9QXT9</accession>
<accession>Q9CV15</accession>
<proteinExistence type="evidence at transcript level"/>
<evidence type="ECO:0000250" key="1">
    <source>
        <dbReference type="UniProtKB" id="Q96LW1"/>
    </source>
</evidence>
<evidence type="ECO:0000255" key="2">
    <source>
        <dbReference type="PROSITE-ProRule" id="PRU00042"/>
    </source>
</evidence>
<evidence type="ECO:0000255" key="3">
    <source>
        <dbReference type="PROSITE-ProRule" id="PRU00119"/>
    </source>
</evidence>
<evidence type="ECO:0000269" key="4">
    <source>
    </source>
</evidence>
<evidence type="ECO:0000269" key="5">
    <source>
    </source>
</evidence>
<evidence type="ECO:0000303" key="6">
    <source>
    </source>
</evidence>
<evidence type="ECO:0000305" key="7"/>
<evidence type="ECO:0000305" key="8">
    <source>
    </source>
</evidence>
<sequence>MAPEQREGKSQVSVTFEDVAVLFTRDEWKKLVPSQRSLYREVMLENYSNLASLGFPFTKPKMISVLQQGEEPWKSEKESHGCSPLGCHGSLQTTKSTQTKESLFQELKRKQLKRDEAWDFTSGKSCRPDNSFRTQDTNESLEIISINHTKILTIDKSRKNFKFGPSVGLKSIGKQKIAGEKTQRNSLEENSTLLSQPKLKTVEKRYKCSTCEKAFIHNSSLRKHLKNHTGERLFQCKDCLKAFSQSSALIQHQRTHTGEKPYICKECGKAFSHSASLCKHLRTHTLEKSYTCKECGKSFSRRSGLFLHQKIHARENPHKYNPGRKASTSLSGCQRIHSRKKTYLCNECGNTFKSSSSLRYHQRIHTGEKPFKCSECGRAFSQSASLIQHERIHTGEKPYRCSECGKGFTSISRLNRHRIIHTGEKFYNCNECGKALSSHSTLIIHERIHTGEKPCKCKVCGKAFRQSSALIQHQRMHTGERPYKCNECGKTFRCNSSLSNHQRTHTGEKPYRCQECGMSFGQSAALIQHRRIHTGEKPFKCNTCGKSFRQSSSLIAHQRIHTGEKPYECSACGKLFSQRSSLTNHYRIHIEEDALNIDLHE</sequence>
<keyword id="KW-0238">DNA-binding</keyword>
<keyword id="KW-1017">Isopeptide bond</keyword>
<keyword id="KW-0479">Metal-binding</keyword>
<keyword id="KW-0539">Nucleus</keyword>
<keyword id="KW-1185">Reference proteome</keyword>
<keyword id="KW-0677">Repeat</keyword>
<keyword id="KW-0804">Transcription</keyword>
<keyword id="KW-0805">Transcription regulation</keyword>
<keyword id="KW-0832">Ubl conjugation</keyword>
<keyword id="KW-0862">Zinc</keyword>
<keyword id="KW-0863">Zinc-finger</keyword>